<dbReference type="EMBL" id="AM260522">
    <property type="protein sequence ID" value="CAJ98911.1"/>
    <property type="molecule type" value="Genomic_DNA"/>
</dbReference>
<dbReference type="RefSeq" id="WP_011577033.1">
    <property type="nucleotide sequence ID" value="NC_008229.1"/>
</dbReference>
<dbReference type="SMR" id="Q17ZL5"/>
<dbReference type="STRING" id="382638.Hac_0048"/>
<dbReference type="GeneID" id="31757597"/>
<dbReference type="KEGG" id="hac:Hac_0048"/>
<dbReference type="eggNOG" id="COG0718">
    <property type="taxonomic scope" value="Bacteria"/>
</dbReference>
<dbReference type="HOGENOM" id="CLU_140930_2_1_7"/>
<dbReference type="OrthoDB" id="5343857at2"/>
<dbReference type="BioCyc" id="HACI382638:HAC_RS00215-MONOMER"/>
<dbReference type="Proteomes" id="UP000000775">
    <property type="component" value="Chromosome"/>
</dbReference>
<dbReference type="GO" id="GO:0043590">
    <property type="term" value="C:bacterial nucleoid"/>
    <property type="evidence" value="ECO:0007669"/>
    <property type="project" value="UniProtKB-UniRule"/>
</dbReference>
<dbReference type="GO" id="GO:0005737">
    <property type="term" value="C:cytoplasm"/>
    <property type="evidence" value="ECO:0007669"/>
    <property type="project" value="UniProtKB-UniRule"/>
</dbReference>
<dbReference type="GO" id="GO:0003677">
    <property type="term" value="F:DNA binding"/>
    <property type="evidence" value="ECO:0007669"/>
    <property type="project" value="UniProtKB-UniRule"/>
</dbReference>
<dbReference type="Gene3D" id="3.30.1310.10">
    <property type="entry name" value="Nucleoid-associated protein YbaB-like domain"/>
    <property type="match status" value="1"/>
</dbReference>
<dbReference type="HAMAP" id="MF_00274">
    <property type="entry name" value="DNA_YbaB_EbfC"/>
    <property type="match status" value="1"/>
</dbReference>
<dbReference type="InterPro" id="IPR036894">
    <property type="entry name" value="YbaB-like_sf"/>
</dbReference>
<dbReference type="InterPro" id="IPR004401">
    <property type="entry name" value="YbaB/EbfC"/>
</dbReference>
<dbReference type="NCBIfam" id="TIGR00103">
    <property type="entry name" value="DNA_YbaB_EbfC"/>
    <property type="match status" value="1"/>
</dbReference>
<dbReference type="Pfam" id="PF02575">
    <property type="entry name" value="YbaB_DNA_bd"/>
    <property type="match status" value="1"/>
</dbReference>
<dbReference type="PIRSF" id="PIRSF004555">
    <property type="entry name" value="UCP004555"/>
    <property type="match status" value="1"/>
</dbReference>
<dbReference type="SUPFAM" id="SSF82607">
    <property type="entry name" value="YbaB-like"/>
    <property type="match status" value="1"/>
</dbReference>
<keyword id="KW-0963">Cytoplasm</keyword>
<keyword id="KW-0238">DNA-binding</keyword>
<protein>
    <recommendedName>
        <fullName evidence="1">Nucleoid-associated protein Hac_0048</fullName>
    </recommendedName>
</protein>
<evidence type="ECO:0000255" key="1">
    <source>
        <dbReference type="HAMAP-Rule" id="MF_00274"/>
    </source>
</evidence>
<organism>
    <name type="scientific">Helicobacter acinonychis (strain Sheeba)</name>
    <dbReference type="NCBI Taxonomy" id="382638"/>
    <lineage>
        <taxon>Bacteria</taxon>
        <taxon>Pseudomonadati</taxon>
        <taxon>Campylobacterota</taxon>
        <taxon>Epsilonproteobacteria</taxon>
        <taxon>Campylobacterales</taxon>
        <taxon>Helicobacteraceae</taxon>
        <taxon>Helicobacter</taxon>
    </lineage>
</organism>
<accession>Q17ZL5</accession>
<comment type="function">
    <text evidence="1">Binds to DNA and alters its conformation. May be involved in regulation of gene expression, nucleoid organization and DNA protection.</text>
</comment>
<comment type="subunit">
    <text evidence="1">Homodimer.</text>
</comment>
<comment type="subcellular location">
    <subcellularLocation>
        <location evidence="1">Cytoplasm</location>
        <location evidence="1">Nucleoid</location>
    </subcellularLocation>
</comment>
<comment type="similarity">
    <text evidence="1">Belongs to the YbaB/EbfC family.</text>
</comment>
<sequence length="97" mass="10723">MDFSQLSGLLDGVKKEFSQLEEKNKDTIYTSKSGGGMVSVSFNGVGELVDLQIDDSLLEDKEAMQIYLMSALNDGYKSVEENRKNLAFSMLGNFAKL</sequence>
<proteinExistence type="inferred from homology"/>
<feature type="chain" id="PRO_1000003752" description="Nucleoid-associated protein Hac_0048">
    <location>
        <begin position="1"/>
        <end position="97"/>
    </location>
</feature>
<gene>
    <name type="ordered locus">Hac_0048</name>
</gene>
<name>Y048_HELAH</name>
<reference key="1">
    <citation type="journal article" date="2006" name="PLoS Genet.">
        <title>Who ate whom? Adaptive Helicobacter genomic changes that accompanied a host jump from early humans to large felines.</title>
        <authorList>
            <person name="Eppinger M."/>
            <person name="Baar C."/>
            <person name="Linz B."/>
            <person name="Raddatz G."/>
            <person name="Lanz C."/>
            <person name="Keller H."/>
            <person name="Morelli G."/>
            <person name="Gressmann H."/>
            <person name="Achtman M."/>
            <person name="Schuster S.C."/>
        </authorList>
    </citation>
    <scope>NUCLEOTIDE SEQUENCE [LARGE SCALE GENOMIC DNA]</scope>
    <source>
        <strain>Sheeba</strain>
    </source>
</reference>